<proteinExistence type="inferred from homology"/>
<accession>Q214E8</accession>
<evidence type="ECO:0000255" key="1">
    <source>
        <dbReference type="HAMAP-Rule" id="MF_00454"/>
    </source>
</evidence>
<evidence type="ECO:0000305" key="2"/>
<sequence>MSLDELRDRAALYALIAAGSVIGGCARYLVGVAQLSLLGTDFPWATLFVNVTGSFVIGFYAAIAGPDGRLFASSRQRQFVMTGICGGYTTFSGFSLETFQLLRTGHALAALINLGVSPMSWLVAVWLGHLVATRLNRLKGT</sequence>
<reference key="1">
    <citation type="submission" date="2006-03" db="EMBL/GenBank/DDBJ databases">
        <title>Complete sequence of Rhodopseudomonas palustris BisB18.</title>
        <authorList>
            <consortium name="US DOE Joint Genome Institute"/>
            <person name="Copeland A."/>
            <person name="Lucas S."/>
            <person name="Lapidus A."/>
            <person name="Barry K."/>
            <person name="Detter J.C."/>
            <person name="Glavina del Rio T."/>
            <person name="Hammon N."/>
            <person name="Israni S."/>
            <person name="Dalin E."/>
            <person name="Tice H."/>
            <person name="Pitluck S."/>
            <person name="Chain P."/>
            <person name="Malfatti S."/>
            <person name="Shin M."/>
            <person name="Vergez L."/>
            <person name="Schmutz J."/>
            <person name="Larimer F."/>
            <person name="Land M."/>
            <person name="Hauser L."/>
            <person name="Pelletier D.A."/>
            <person name="Kyrpides N."/>
            <person name="Anderson I."/>
            <person name="Oda Y."/>
            <person name="Harwood C.S."/>
            <person name="Richardson P."/>
        </authorList>
    </citation>
    <scope>NUCLEOTIDE SEQUENCE [LARGE SCALE GENOMIC DNA]</scope>
    <source>
        <strain>BisB18</strain>
    </source>
</reference>
<organism>
    <name type="scientific">Rhodopseudomonas palustris (strain BisB18)</name>
    <dbReference type="NCBI Taxonomy" id="316056"/>
    <lineage>
        <taxon>Bacteria</taxon>
        <taxon>Pseudomonadati</taxon>
        <taxon>Pseudomonadota</taxon>
        <taxon>Alphaproteobacteria</taxon>
        <taxon>Hyphomicrobiales</taxon>
        <taxon>Nitrobacteraceae</taxon>
        <taxon>Rhodopseudomonas</taxon>
    </lineage>
</organism>
<gene>
    <name evidence="1" type="primary">fluC1</name>
    <name evidence="1" type="synonym">crcB1</name>
    <name type="ordered locus">RPC_2689</name>
</gene>
<comment type="function">
    <text evidence="1">Fluoride-specific ion channel. Important for reducing fluoride concentration in the cell, thus reducing its toxicity.</text>
</comment>
<comment type="catalytic activity">
    <reaction evidence="1">
        <text>fluoride(in) = fluoride(out)</text>
        <dbReference type="Rhea" id="RHEA:76159"/>
        <dbReference type="ChEBI" id="CHEBI:17051"/>
    </reaction>
    <physiologicalReaction direction="left-to-right" evidence="1">
        <dbReference type="Rhea" id="RHEA:76160"/>
    </physiologicalReaction>
</comment>
<comment type="activity regulation">
    <text evidence="1">Na(+) is not transported, but it plays an essential structural role and its presence is essential for fluoride channel function.</text>
</comment>
<comment type="subcellular location">
    <subcellularLocation>
        <location evidence="1">Cell inner membrane</location>
        <topology evidence="1">Multi-pass membrane protein</topology>
    </subcellularLocation>
</comment>
<comment type="similarity">
    <text evidence="1">Belongs to the fluoride channel Fluc/FEX (TC 1.A.43) family.</text>
</comment>
<comment type="sequence caution" evidence="2">
    <conflict type="erroneous initiation">
        <sequence resource="EMBL-CDS" id="ABD88238"/>
    </conflict>
</comment>
<dbReference type="EMBL" id="CP000301">
    <property type="protein sequence ID" value="ABD88238.1"/>
    <property type="status" value="ALT_INIT"/>
    <property type="molecule type" value="Genomic_DNA"/>
</dbReference>
<dbReference type="SMR" id="Q214E8"/>
<dbReference type="STRING" id="316056.RPC_2689"/>
<dbReference type="KEGG" id="rpc:RPC_2689"/>
<dbReference type="eggNOG" id="COG0239">
    <property type="taxonomic scope" value="Bacteria"/>
</dbReference>
<dbReference type="HOGENOM" id="CLU_114342_3_0_5"/>
<dbReference type="OrthoDB" id="9806299at2"/>
<dbReference type="GO" id="GO:0005886">
    <property type="term" value="C:plasma membrane"/>
    <property type="evidence" value="ECO:0007669"/>
    <property type="project" value="UniProtKB-SubCell"/>
</dbReference>
<dbReference type="GO" id="GO:0062054">
    <property type="term" value="F:fluoride channel activity"/>
    <property type="evidence" value="ECO:0007669"/>
    <property type="project" value="UniProtKB-UniRule"/>
</dbReference>
<dbReference type="GO" id="GO:0046872">
    <property type="term" value="F:metal ion binding"/>
    <property type="evidence" value="ECO:0007669"/>
    <property type="project" value="UniProtKB-KW"/>
</dbReference>
<dbReference type="GO" id="GO:0140114">
    <property type="term" value="P:cellular detoxification of fluoride"/>
    <property type="evidence" value="ECO:0007669"/>
    <property type="project" value="UniProtKB-UniRule"/>
</dbReference>
<dbReference type="HAMAP" id="MF_00454">
    <property type="entry name" value="FluC"/>
    <property type="match status" value="1"/>
</dbReference>
<dbReference type="InterPro" id="IPR003691">
    <property type="entry name" value="FluC"/>
</dbReference>
<dbReference type="NCBIfam" id="TIGR00494">
    <property type="entry name" value="crcB"/>
    <property type="match status" value="1"/>
</dbReference>
<dbReference type="NCBIfam" id="NF010802">
    <property type="entry name" value="PRK14206.1"/>
    <property type="match status" value="1"/>
</dbReference>
<dbReference type="PANTHER" id="PTHR28259">
    <property type="entry name" value="FLUORIDE EXPORT PROTEIN 1-RELATED"/>
    <property type="match status" value="1"/>
</dbReference>
<dbReference type="PANTHER" id="PTHR28259:SF1">
    <property type="entry name" value="FLUORIDE EXPORT PROTEIN 1-RELATED"/>
    <property type="match status" value="1"/>
</dbReference>
<dbReference type="Pfam" id="PF02537">
    <property type="entry name" value="CRCB"/>
    <property type="match status" value="1"/>
</dbReference>
<keyword id="KW-0997">Cell inner membrane</keyword>
<keyword id="KW-1003">Cell membrane</keyword>
<keyword id="KW-0407">Ion channel</keyword>
<keyword id="KW-0406">Ion transport</keyword>
<keyword id="KW-0472">Membrane</keyword>
<keyword id="KW-0479">Metal-binding</keyword>
<keyword id="KW-0915">Sodium</keyword>
<keyword id="KW-0812">Transmembrane</keyword>
<keyword id="KW-1133">Transmembrane helix</keyword>
<keyword id="KW-0813">Transport</keyword>
<protein>
    <recommendedName>
        <fullName evidence="1">Fluoride-specific ion channel FluC 1</fullName>
    </recommendedName>
</protein>
<name>FLUC1_RHOPB</name>
<feature type="chain" id="PRO_0000252928" description="Fluoride-specific ion channel FluC 1">
    <location>
        <begin position="1"/>
        <end position="141"/>
    </location>
</feature>
<feature type="transmembrane region" description="Helical" evidence="1">
    <location>
        <begin position="12"/>
        <end position="32"/>
    </location>
</feature>
<feature type="transmembrane region" description="Helical" evidence="1">
    <location>
        <begin position="44"/>
        <end position="64"/>
    </location>
</feature>
<feature type="transmembrane region" description="Helical" evidence="1">
    <location>
        <begin position="79"/>
        <end position="99"/>
    </location>
</feature>
<feature type="transmembrane region" description="Helical" evidence="1">
    <location>
        <begin position="107"/>
        <end position="127"/>
    </location>
</feature>
<feature type="binding site" evidence="1">
    <location>
        <position position="86"/>
    </location>
    <ligand>
        <name>Na(+)</name>
        <dbReference type="ChEBI" id="CHEBI:29101"/>
        <note>structural</note>
    </ligand>
</feature>
<feature type="binding site" evidence="1">
    <location>
        <position position="89"/>
    </location>
    <ligand>
        <name>Na(+)</name>
        <dbReference type="ChEBI" id="CHEBI:29101"/>
        <note>structural</note>
    </ligand>
</feature>